<comment type="function">
    <text evidence="1">Specifically methylates the N4 position of cytidine in position 1402 (C1402) of 16S rRNA.</text>
</comment>
<comment type="catalytic activity">
    <reaction evidence="1">
        <text>cytidine(1402) in 16S rRNA + S-adenosyl-L-methionine = N(4)-methylcytidine(1402) in 16S rRNA + S-adenosyl-L-homocysteine + H(+)</text>
        <dbReference type="Rhea" id="RHEA:42928"/>
        <dbReference type="Rhea" id="RHEA-COMP:10286"/>
        <dbReference type="Rhea" id="RHEA-COMP:10287"/>
        <dbReference type="ChEBI" id="CHEBI:15378"/>
        <dbReference type="ChEBI" id="CHEBI:57856"/>
        <dbReference type="ChEBI" id="CHEBI:59789"/>
        <dbReference type="ChEBI" id="CHEBI:74506"/>
        <dbReference type="ChEBI" id="CHEBI:82748"/>
        <dbReference type="EC" id="2.1.1.199"/>
    </reaction>
</comment>
<comment type="subcellular location">
    <subcellularLocation>
        <location evidence="1">Cytoplasm</location>
    </subcellularLocation>
</comment>
<comment type="similarity">
    <text evidence="1">Belongs to the methyltransferase superfamily. RsmH family.</text>
</comment>
<proteinExistence type="inferred from homology"/>
<accession>B8DP86</accession>
<sequence>MTGAPDSTTPQAASVSTEGARAATLHVPVLLDEVLEALAPRPGGRYLDGTVGLGGHSAAIMERIGPDGELCCLDRDTTALGLARQRLAPWGGRVHFFHTRYADFEAALDQLGWDKVDGALIDIGVSSMQIDMADRGFSFHADGPLDMRMDRDGDEAPASRLVNRATVDVLKDIILRYGEDPMAGRIARAIVDARAAGPIETTAQLAAIVDRAYPAKWRATSRNHPATRTFQALRMAVNDELGQLERFLDRILDRLNPGGRLAVITFHSLEDRIVKHRLRDESQGCVCPRSVSRCECGHKARVDVLTRKPVTATDAELARNSRASSAKLRAAQRLAEGQAPRPRRRNKYAPEGRDEPEGGAA</sequence>
<dbReference type="EC" id="2.1.1.199" evidence="1"/>
<dbReference type="EMBL" id="CP001197">
    <property type="protein sequence ID" value="ACL07918.1"/>
    <property type="molecule type" value="Genomic_DNA"/>
</dbReference>
<dbReference type="SMR" id="B8DP86"/>
<dbReference type="STRING" id="883.DvMF_0963"/>
<dbReference type="KEGG" id="dvm:DvMF_0963"/>
<dbReference type="eggNOG" id="COG0275">
    <property type="taxonomic scope" value="Bacteria"/>
</dbReference>
<dbReference type="HOGENOM" id="CLU_038422_3_0_7"/>
<dbReference type="OrthoDB" id="9806637at2"/>
<dbReference type="GO" id="GO:0005737">
    <property type="term" value="C:cytoplasm"/>
    <property type="evidence" value="ECO:0007669"/>
    <property type="project" value="UniProtKB-SubCell"/>
</dbReference>
<dbReference type="GO" id="GO:0071424">
    <property type="term" value="F:rRNA (cytosine-N4-)-methyltransferase activity"/>
    <property type="evidence" value="ECO:0007669"/>
    <property type="project" value="UniProtKB-UniRule"/>
</dbReference>
<dbReference type="GO" id="GO:0070475">
    <property type="term" value="P:rRNA base methylation"/>
    <property type="evidence" value="ECO:0007669"/>
    <property type="project" value="UniProtKB-UniRule"/>
</dbReference>
<dbReference type="Gene3D" id="1.10.150.170">
    <property type="entry name" value="Putative methyltransferase TM0872, insert domain"/>
    <property type="match status" value="1"/>
</dbReference>
<dbReference type="Gene3D" id="3.40.50.150">
    <property type="entry name" value="Vaccinia Virus protein VP39"/>
    <property type="match status" value="1"/>
</dbReference>
<dbReference type="HAMAP" id="MF_01007">
    <property type="entry name" value="16SrRNA_methyltr_H"/>
    <property type="match status" value="1"/>
</dbReference>
<dbReference type="InterPro" id="IPR002903">
    <property type="entry name" value="RsmH"/>
</dbReference>
<dbReference type="InterPro" id="IPR023397">
    <property type="entry name" value="SAM-dep_MeTrfase_MraW_recog"/>
</dbReference>
<dbReference type="InterPro" id="IPR029063">
    <property type="entry name" value="SAM-dependent_MTases_sf"/>
</dbReference>
<dbReference type="NCBIfam" id="TIGR00006">
    <property type="entry name" value="16S rRNA (cytosine(1402)-N(4))-methyltransferase RsmH"/>
    <property type="match status" value="1"/>
</dbReference>
<dbReference type="PANTHER" id="PTHR11265:SF0">
    <property type="entry name" value="12S RRNA N4-METHYLCYTIDINE METHYLTRANSFERASE"/>
    <property type="match status" value="1"/>
</dbReference>
<dbReference type="PANTHER" id="PTHR11265">
    <property type="entry name" value="S-ADENOSYL-METHYLTRANSFERASE MRAW"/>
    <property type="match status" value="1"/>
</dbReference>
<dbReference type="Pfam" id="PF01795">
    <property type="entry name" value="Methyltransf_5"/>
    <property type="match status" value="1"/>
</dbReference>
<dbReference type="PIRSF" id="PIRSF004486">
    <property type="entry name" value="MraW"/>
    <property type="match status" value="1"/>
</dbReference>
<dbReference type="SUPFAM" id="SSF81799">
    <property type="entry name" value="Putative methyltransferase TM0872, insert domain"/>
    <property type="match status" value="1"/>
</dbReference>
<dbReference type="SUPFAM" id="SSF53335">
    <property type="entry name" value="S-adenosyl-L-methionine-dependent methyltransferases"/>
    <property type="match status" value="1"/>
</dbReference>
<evidence type="ECO:0000255" key="1">
    <source>
        <dbReference type="HAMAP-Rule" id="MF_01007"/>
    </source>
</evidence>
<evidence type="ECO:0000256" key="2">
    <source>
        <dbReference type="SAM" id="MobiDB-lite"/>
    </source>
</evidence>
<protein>
    <recommendedName>
        <fullName evidence="1">Ribosomal RNA small subunit methyltransferase H</fullName>
        <ecNumber evidence="1">2.1.1.199</ecNumber>
    </recommendedName>
    <alternativeName>
        <fullName evidence="1">16S rRNA m(4)C1402 methyltransferase</fullName>
    </alternativeName>
    <alternativeName>
        <fullName evidence="1">rRNA (cytosine-N(4)-)-methyltransferase RsmH</fullName>
    </alternativeName>
</protein>
<organism>
    <name type="scientific">Nitratidesulfovibrio vulgaris (strain DSM 19637 / Miyazaki F)</name>
    <name type="common">Desulfovibrio vulgaris</name>
    <dbReference type="NCBI Taxonomy" id="883"/>
    <lineage>
        <taxon>Bacteria</taxon>
        <taxon>Pseudomonadati</taxon>
        <taxon>Thermodesulfobacteriota</taxon>
        <taxon>Desulfovibrionia</taxon>
        <taxon>Desulfovibrionales</taxon>
        <taxon>Desulfovibrionaceae</taxon>
        <taxon>Nitratidesulfovibrio</taxon>
    </lineage>
</organism>
<reference key="1">
    <citation type="submission" date="2008-10" db="EMBL/GenBank/DDBJ databases">
        <title>Complete sequence of Desulfovibrio vulgaris str. 'Miyazaki F'.</title>
        <authorList>
            <person name="Lucas S."/>
            <person name="Copeland A."/>
            <person name="Lapidus A."/>
            <person name="Glavina del Rio T."/>
            <person name="Dalin E."/>
            <person name="Tice H."/>
            <person name="Bruce D."/>
            <person name="Goodwin L."/>
            <person name="Pitluck S."/>
            <person name="Sims D."/>
            <person name="Brettin T."/>
            <person name="Detter J.C."/>
            <person name="Han C."/>
            <person name="Larimer F."/>
            <person name="Land M."/>
            <person name="Hauser L."/>
            <person name="Kyrpides N."/>
            <person name="Mikhailova N."/>
            <person name="Hazen T.C."/>
            <person name="Richardson P."/>
        </authorList>
    </citation>
    <scope>NUCLEOTIDE SEQUENCE [LARGE SCALE GENOMIC DNA]</scope>
    <source>
        <strain>DSM 19637 / Miyazaki F</strain>
    </source>
</reference>
<feature type="chain" id="PRO_0000386854" description="Ribosomal RNA small subunit methyltransferase H">
    <location>
        <begin position="1"/>
        <end position="361"/>
    </location>
</feature>
<feature type="region of interest" description="Disordered" evidence="2">
    <location>
        <begin position="318"/>
        <end position="361"/>
    </location>
</feature>
<feature type="compositionally biased region" description="Basic and acidic residues" evidence="2">
    <location>
        <begin position="348"/>
        <end position="361"/>
    </location>
</feature>
<feature type="binding site" evidence="1">
    <location>
        <begin position="54"/>
        <end position="56"/>
    </location>
    <ligand>
        <name>S-adenosyl-L-methionine</name>
        <dbReference type="ChEBI" id="CHEBI:59789"/>
    </ligand>
</feature>
<feature type="binding site" evidence="1">
    <location>
        <position position="74"/>
    </location>
    <ligand>
        <name>S-adenosyl-L-methionine</name>
        <dbReference type="ChEBI" id="CHEBI:59789"/>
    </ligand>
</feature>
<feature type="binding site" evidence="1">
    <location>
        <position position="101"/>
    </location>
    <ligand>
        <name>S-adenosyl-L-methionine</name>
        <dbReference type="ChEBI" id="CHEBI:59789"/>
    </ligand>
</feature>
<feature type="binding site" evidence="1">
    <location>
        <position position="122"/>
    </location>
    <ligand>
        <name>S-adenosyl-L-methionine</name>
        <dbReference type="ChEBI" id="CHEBI:59789"/>
    </ligand>
</feature>
<feature type="binding site" evidence="1">
    <location>
        <position position="129"/>
    </location>
    <ligand>
        <name>S-adenosyl-L-methionine</name>
        <dbReference type="ChEBI" id="CHEBI:59789"/>
    </ligand>
</feature>
<name>RSMH_NITV9</name>
<gene>
    <name evidence="1" type="primary">rsmH</name>
    <name type="synonym">mraW</name>
    <name type="ordered locus">DvMF_0963</name>
</gene>
<keyword id="KW-0963">Cytoplasm</keyword>
<keyword id="KW-0489">Methyltransferase</keyword>
<keyword id="KW-0698">rRNA processing</keyword>
<keyword id="KW-0949">S-adenosyl-L-methionine</keyword>
<keyword id="KW-0808">Transferase</keyword>